<evidence type="ECO:0000250" key="1"/>
<evidence type="ECO:0000250" key="2">
    <source>
        <dbReference type="UniProtKB" id="Q9LPU9"/>
    </source>
</evidence>
<evidence type="ECO:0000255" key="3"/>
<evidence type="ECO:0000305" key="4"/>
<accession>B7F138</accession>
<accession>Q0JBE2</accession>
<accession>Q7XQQ6</accession>
<organism>
    <name type="scientific">Oryza sativa subsp. japonica</name>
    <name type="common">Rice</name>
    <dbReference type="NCBI Taxonomy" id="39947"/>
    <lineage>
        <taxon>Eukaryota</taxon>
        <taxon>Viridiplantae</taxon>
        <taxon>Streptophyta</taxon>
        <taxon>Embryophyta</taxon>
        <taxon>Tracheophyta</taxon>
        <taxon>Spermatophyta</taxon>
        <taxon>Magnoliopsida</taxon>
        <taxon>Liliopsida</taxon>
        <taxon>Poales</taxon>
        <taxon>Poaceae</taxon>
        <taxon>BOP clade</taxon>
        <taxon>Oryzoideae</taxon>
        <taxon>Oryzeae</taxon>
        <taxon>Oryzinae</taxon>
        <taxon>Oryza</taxon>
        <taxon>Oryza sativa</taxon>
    </lineage>
</organism>
<keyword id="KW-0406">Ion transport</keyword>
<keyword id="KW-0408">Iron</keyword>
<keyword id="KW-0410">Iron transport</keyword>
<keyword id="KW-0472">Membrane</keyword>
<keyword id="KW-1185">Reference proteome</keyword>
<keyword id="KW-0812">Transmembrane</keyword>
<keyword id="KW-1133">Transmembrane helix</keyword>
<keyword id="KW-0813">Transport</keyword>
<keyword id="KW-0926">Vacuole</keyword>
<comment type="function">
    <text evidence="1">Probable vacuolar iron transporter that may be involved in the regulation of iron distribution throughout the plant.</text>
</comment>
<comment type="catalytic activity">
    <reaction evidence="2">
        <text>Fe(2+)(in) = Fe(2+)(out)</text>
        <dbReference type="Rhea" id="RHEA:28486"/>
        <dbReference type="ChEBI" id="CHEBI:29033"/>
    </reaction>
    <physiologicalReaction direction="left-to-right" evidence="4">
        <dbReference type="Rhea" id="RHEA:28487"/>
    </physiologicalReaction>
</comment>
<comment type="subcellular location">
    <subcellularLocation>
        <location evidence="4">Vacuole membrane</location>
        <topology evidence="4">Multi-pass membrane protein</topology>
    </subcellularLocation>
</comment>
<comment type="similarity">
    <text evidence="4">Belongs to the CCC1 family.</text>
</comment>
<comment type="sequence caution" evidence="4">
    <conflict type="erroneous initiation">
        <sequence resource="EMBL-CDS" id="BAF15345"/>
    </conflict>
    <text>Extended N-terminus.</text>
</comment>
<protein>
    <recommendedName>
        <fullName>Vacuolar iron transporter homolog 2</fullName>
    </recommendedName>
    <alternativeName>
        <fullName>Protein NODULIN-LIKE 2</fullName>
    </alternativeName>
</protein>
<proteinExistence type="evidence at transcript level"/>
<name>VITH2_ORYSJ</name>
<dbReference type="EMBL" id="AL606459">
    <property type="protein sequence ID" value="CAE03023.3"/>
    <property type="molecule type" value="Genomic_DNA"/>
</dbReference>
<dbReference type="EMBL" id="AP008210">
    <property type="protein sequence ID" value="BAF15345.1"/>
    <property type="status" value="ALT_INIT"/>
    <property type="molecule type" value="Genomic_DNA"/>
</dbReference>
<dbReference type="EMBL" id="AP014960">
    <property type="status" value="NOT_ANNOTATED_CDS"/>
    <property type="molecule type" value="Genomic_DNA"/>
</dbReference>
<dbReference type="EMBL" id="AK108230">
    <property type="protein sequence ID" value="BAG98335.1"/>
    <property type="molecule type" value="mRNA"/>
</dbReference>
<dbReference type="RefSeq" id="XP_015634450.1">
    <property type="nucleotide sequence ID" value="XM_015778964.1"/>
</dbReference>
<dbReference type="SMR" id="B7F138"/>
<dbReference type="FunCoup" id="B7F138">
    <property type="interactions" value="2"/>
</dbReference>
<dbReference type="STRING" id="39947.B7F138"/>
<dbReference type="PaxDb" id="39947-B7F138"/>
<dbReference type="KEGG" id="dosa:Os04g0538400"/>
<dbReference type="eggNOG" id="KOG4473">
    <property type="taxonomic scope" value="Eukaryota"/>
</dbReference>
<dbReference type="HOGENOM" id="CLU_038957_5_0_1"/>
<dbReference type="InParanoid" id="B7F138"/>
<dbReference type="OrthoDB" id="73465at2759"/>
<dbReference type="Proteomes" id="UP000000763">
    <property type="component" value="Chromosome 4"/>
</dbReference>
<dbReference type="Proteomes" id="UP000059680">
    <property type="component" value="Chromosome 4"/>
</dbReference>
<dbReference type="GO" id="GO:0016020">
    <property type="term" value="C:membrane"/>
    <property type="evidence" value="ECO:0000318"/>
    <property type="project" value="GO_Central"/>
</dbReference>
<dbReference type="GO" id="GO:0005774">
    <property type="term" value="C:vacuolar membrane"/>
    <property type="evidence" value="ECO:0007669"/>
    <property type="project" value="UniProtKB-SubCell"/>
</dbReference>
<dbReference type="GO" id="GO:0005381">
    <property type="term" value="F:iron ion transmembrane transporter activity"/>
    <property type="evidence" value="ECO:0000318"/>
    <property type="project" value="GO_Central"/>
</dbReference>
<dbReference type="GO" id="GO:0005384">
    <property type="term" value="F:manganese ion transmembrane transporter activity"/>
    <property type="evidence" value="ECO:0000318"/>
    <property type="project" value="GO_Central"/>
</dbReference>
<dbReference type="GO" id="GO:0030026">
    <property type="term" value="P:intracellular manganese ion homeostasis"/>
    <property type="evidence" value="ECO:0000318"/>
    <property type="project" value="GO_Central"/>
</dbReference>
<dbReference type="InterPro" id="IPR008217">
    <property type="entry name" value="Ccc1_fam"/>
</dbReference>
<dbReference type="PANTHER" id="PTHR31851">
    <property type="entry name" value="FE(2+)/MN(2+) TRANSPORTER PCL1"/>
    <property type="match status" value="1"/>
</dbReference>
<dbReference type="Pfam" id="PF01988">
    <property type="entry name" value="VIT1"/>
    <property type="match status" value="2"/>
</dbReference>
<reference key="1">
    <citation type="journal article" date="2002" name="Nature">
        <title>Sequence and analysis of rice chromosome 4.</title>
        <authorList>
            <person name="Feng Q."/>
            <person name="Zhang Y."/>
            <person name="Hao P."/>
            <person name="Wang S."/>
            <person name="Fu G."/>
            <person name="Huang Y."/>
            <person name="Li Y."/>
            <person name="Zhu J."/>
            <person name="Liu Y."/>
            <person name="Hu X."/>
            <person name="Jia P."/>
            <person name="Zhang Y."/>
            <person name="Zhao Q."/>
            <person name="Ying K."/>
            <person name="Yu S."/>
            <person name="Tang Y."/>
            <person name="Weng Q."/>
            <person name="Zhang L."/>
            <person name="Lu Y."/>
            <person name="Mu J."/>
            <person name="Lu Y."/>
            <person name="Zhang L.S."/>
            <person name="Yu Z."/>
            <person name="Fan D."/>
            <person name="Liu X."/>
            <person name="Lu T."/>
            <person name="Li C."/>
            <person name="Wu Y."/>
            <person name="Sun T."/>
            <person name="Lei H."/>
            <person name="Li T."/>
            <person name="Hu H."/>
            <person name="Guan J."/>
            <person name="Wu M."/>
            <person name="Zhang R."/>
            <person name="Zhou B."/>
            <person name="Chen Z."/>
            <person name="Chen L."/>
            <person name="Jin Z."/>
            <person name="Wang R."/>
            <person name="Yin H."/>
            <person name="Cai Z."/>
            <person name="Ren S."/>
            <person name="Lv G."/>
            <person name="Gu W."/>
            <person name="Zhu G."/>
            <person name="Tu Y."/>
            <person name="Jia J."/>
            <person name="Zhang Y."/>
            <person name="Chen J."/>
            <person name="Kang H."/>
            <person name="Chen X."/>
            <person name="Shao C."/>
            <person name="Sun Y."/>
            <person name="Hu Q."/>
            <person name="Zhang X."/>
            <person name="Zhang W."/>
            <person name="Wang L."/>
            <person name="Ding C."/>
            <person name="Sheng H."/>
            <person name="Gu J."/>
            <person name="Chen S."/>
            <person name="Ni L."/>
            <person name="Zhu F."/>
            <person name="Chen W."/>
            <person name="Lan L."/>
            <person name="Lai Y."/>
            <person name="Cheng Z."/>
            <person name="Gu M."/>
            <person name="Jiang J."/>
            <person name="Li J."/>
            <person name="Hong G."/>
            <person name="Xue Y."/>
            <person name="Han B."/>
        </authorList>
    </citation>
    <scope>NUCLEOTIDE SEQUENCE [LARGE SCALE GENOMIC DNA]</scope>
    <source>
        <strain>cv. Nipponbare</strain>
    </source>
</reference>
<reference key="2">
    <citation type="journal article" date="2005" name="Nature">
        <title>The map-based sequence of the rice genome.</title>
        <authorList>
            <consortium name="International rice genome sequencing project (IRGSP)"/>
        </authorList>
    </citation>
    <scope>NUCLEOTIDE SEQUENCE [LARGE SCALE GENOMIC DNA]</scope>
    <source>
        <strain>cv. Nipponbare</strain>
    </source>
</reference>
<reference key="3">
    <citation type="journal article" date="2008" name="Nucleic Acids Res.">
        <title>The rice annotation project database (RAP-DB): 2008 update.</title>
        <authorList>
            <consortium name="The rice annotation project (RAP)"/>
        </authorList>
    </citation>
    <scope>GENOME REANNOTATION</scope>
    <source>
        <strain>cv. Nipponbare</strain>
    </source>
</reference>
<reference key="4">
    <citation type="journal article" date="2013" name="Rice">
        <title>Improvement of the Oryza sativa Nipponbare reference genome using next generation sequence and optical map data.</title>
        <authorList>
            <person name="Kawahara Y."/>
            <person name="de la Bastide M."/>
            <person name="Hamilton J.P."/>
            <person name="Kanamori H."/>
            <person name="McCombie W.R."/>
            <person name="Ouyang S."/>
            <person name="Schwartz D.C."/>
            <person name="Tanaka T."/>
            <person name="Wu J."/>
            <person name="Zhou S."/>
            <person name="Childs K.L."/>
            <person name="Davidson R.M."/>
            <person name="Lin H."/>
            <person name="Quesada-Ocampo L."/>
            <person name="Vaillancourt B."/>
            <person name="Sakai H."/>
            <person name="Lee S.S."/>
            <person name="Kim J."/>
            <person name="Numa H."/>
            <person name="Itoh T."/>
            <person name="Buell C.R."/>
            <person name="Matsumoto T."/>
        </authorList>
    </citation>
    <scope>GENOME REANNOTATION</scope>
    <source>
        <strain>cv. Nipponbare</strain>
    </source>
</reference>
<reference key="5">
    <citation type="journal article" date="2003" name="Science">
        <title>Collection, mapping, and annotation of over 28,000 cDNA clones from japonica rice.</title>
        <authorList>
            <consortium name="The rice full-length cDNA consortium"/>
        </authorList>
    </citation>
    <scope>NUCLEOTIDE SEQUENCE [LARGE SCALE MRNA]</scope>
    <source>
        <strain>cv. Nipponbare</strain>
    </source>
</reference>
<sequence length="189" mass="19107">MARAQWLRAAVLGANDGLVSVASLMIGIGAVNENNKAMLVSGLAGLVAGACSMAIGEFVSVYAQYDIEVTQIERDGDIDGADAAAAREKLPSPTQAAFASALAFAIGGLLPLLTSGFIKPWGPRVGVVCAASSVGLAGFGAAGGYLGGANMVRSGTRVLLGGWLAMLITYAVLRLFATIFHGMNISSSA</sequence>
<feature type="chain" id="PRO_0000411013" description="Vacuolar iron transporter homolog 2">
    <location>
        <begin position="1"/>
        <end position="189"/>
    </location>
</feature>
<feature type="topological domain" description="Cytoplasmic" evidence="3">
    <location>
        <begin position="1"/>
        <end position="10"/>
    </location>
</feature>
<feature type="transmembrane region" description="Helical" evidence="3">
    <location>
        <begin position="11"/>
        <end position="31"/>
    </location>
</feature>
<feature type="topological domain" description="Vacuolar" evidence="3">
    <location>
        <begin position="32"/>
        <end position="38"/>
    </location>
</feature>
<feature type="transmembrane region" description="Helical" evidence="3">
    <location>
        <begin position="39"/>
        <end position="59"/>
    </location>
</feature>
<feature type="topological domain" description="Cytoplasmic" evidence="3">
    <location>
        <begin position="60"/>
        <end position="97"/>
    </location>
</feature>
<feature type="transmembrane region" description="Helical" evidence="3">
    <location>
        <begin position="98"/>
        <end position="118"/>
    </location>
</feature>
<feature type="topological domain" description="Vacuolar" evidence="3">
    <location>
        <begin position="119"/>
        <end position="124"/>
    </location>
</feature>
<feature type="transmembrane region" description="Helical" evidence="3">
    <location>
        <begin position="125"/>
        <end position="145"/>
    </location>
</feature>
<feature type="topological domain" description="Cytoplasmic" evidence="3">
    <location>
        <begin position="146"/>
        <end position="159"/>
    </location>
</feature>
<feature type="transmembrane region" description="Helical" evidence="3">
    <location>
        <begin position="160"/>
        <end position="180"/>
    </location>
</feature>
<feature type="topological domain" description="Vacuolar" evidence="3">
    <location>
        <begin position="181"/>
        <end position="189"/>
    </location>
</feature>
<gene>
    <name type="ordered locus">Os04g0538400</name>
    <name type="ordered locus">LOC_Os04g45520</name>
    <name type="ORF">OSJNBa0091D06.17</name>
</gene>